<reference key="1">
    <citation type="journal article" date="2007" name="Infect. Immun.">
        <title>Characterization of the urease operon of Brucella abortus and assessment of its role in virulence of the bacterium.</title>
        <authorList>
            <person name="Sangari F.J."/>
            <person name="Seoane A."/>
            <person name="Rodriguez M.C."/>
            <person name="Aguero J."/>
            <person name="Garcia Lobo J.M."/>
        </authorList>
    </citation>
    <scope>NUCLEOTIDE SEQUENCE [GENOMIC DNA]</scope>
    <scope>DISRUPTION PHENOTYPE</scope>
    <scope>CHARACTERIZATION OF ROLE IN VIRULENCE</scope>
</reference>
<reference key="2">
    <citation type="journal article" date="2005" name="Infect. Immun.">
        <title>Whole-genome analyses of speciation events in pathogenic Brucellae.</title>
        <authorList>
            <person name="Chain P.S."/>
            <person name="Comerci D.J."/>
            <person name="Tolmasky M.E."/>
            <person name="Larimer F.W."/>
            <person name="Malfatti S.A."/>
            <person name="Vergez L.M."/>
            <person name="Aguero F."/>
            <person name="Land M.L."/>
            <person name="Ugalde R.A."/>
            <person name="Garcia E."/>
        </authorList>
    </citation>
    <scope>NUCLEOTIDE SEQUENCE [LARGE SCALE GENOMIC DNA]</scope>
    <source>
        <strain>2308</strain>
    </source>
</reference>
<comment type="function">
    <text>May protect brucellae during their passage through the stomach. The major route of infection in human brucellosis is oral.</text>
</comment>
<comment type="catalytic activity">
    <reaction evidence="1">
        <text>urea + 2 H2O + H(+) = hydrogencarbonate + 2 NH4(+)</text>
        <dbReference type="Rhea" id="RHEA:20557"/>
        <dbReference type="ChEBI" id="CHEBI:15377"/>
        <dbReference type="ChEBI" id="CHEBI:15378"/>
        <dbReference type="ChEBI" id="CHEBI:16199"/>
        <dbReference type="ChEBI" id="CHEBI:17544"/>
        <dbReference type="ChEBI" id="CHEBI:28938"/>
        <dbReference type="EC" id="3.5.1.5"/>
    </reaction>
</comment>
<comment type="cofactor">
    <cofactor evidence="1">
        <name>Ni cation</name>
        <dbReference type="ChEBI" id="CHEBI:25516"/>
    </cofactor>
    <text evidence="1">Binds 2 nickel ions per subunit.</text>
</comment>
<comment type="pathway">
    <text evidence="1">Nitrogen metabolism; urea degradation; CO(2) and NH(3) from urea (urease route): step 1/1.</text>
</comment>
<comment type="subunit">
    <text evidence="1">Heterotrimer of UreA (gamma), UreB (beta) and UreC (alpha) subunits. Three heterotrimers associate to form the active enzyme.</text>
</comment>
<comment type="subcellular location">
    <subcellularLocation>
        <location evidence="1">Cytoplasm</location>
    </subcellularLocation>
</comment>
<comment type="PTM">
    <text evidence="1">Carboxylation allows a single lysine to coordinate two nickel ions.</text>
</comment>
<comment type="disruption phenotype">
    <text evidence="2">Disruption of the ure1 gene cluster via a large in-frame deletion in this gene abrogates urease activity.</text>
</comment>
<comment type="similarity">
    <text evidence="1">Belongs to the metallo-dependent hydrolases superfamily. Urease alpha subunit family.</text>
</comment>
<organism>
    <name type="scientific">Brucella abortus (strain 2308)</name>
    <dbReference type="NCBI Taxonomy" id="359391"/>
    <lineage>
        <taxon>Bacteria</taxon>
        <taxon>Pseudomonadati</taxon>
        <taxon>Pseudomonadota</taxon>
        <taxon>Alphaproteobacteria</taxon>
        <taxon>Hyphomicrobiales</taxon>
        <taxon>Brucellaceae</taxon>
        <taxon>Brucella/Ochrobactrum group</taxon>
        <taxon>Brucella</taxon>
    </lineage>
</organism>
<sequence length="570" mass="61011">MPARISRATYAQMFGPTVGDKVRLADTDLIIEVERDLTTYGEEVKFGGGKVIRDGMGQSQLSRAEGAMDTVITNALILDHSGIYKADIGLLDGRIALIGKAGNPDTQPGISIIIGPGTEIIAGEGKIVTAGGIDTHVHFISPQQVDEALNAGITCMVGGGTGPAHGTLATTCTPGPWHIARLIQSFDGLPMNIGVFGKGNASLPGALEEMVRAGACGLKLHEDWGCTPAAIDNCLSVADHFDVQVAIHTDTLNEGGFVEDTLNAFKGRTIHSFHTEGAGGGHAPDIIRVCQYPNVLPASTNPTRPYTVNTIAEHLDMLMVCHHLSPAIPEDIAFAESRIRKETIAAEDILHDMGAFSIISSDSQAMGRVGEMIIRCWQTADKMKKQRGSLPDDRPGNDNYRARRYIAKYTINPAIAHGMAHEIGSVEVGKRADLVLWNPAFFGVKPDMVLLGGWIATAPMGDANGSIPTPQPMHTRPMFGSFGKALTNTSITFVSQAAMDEGLREKIGVDKQLVAVVNTRGGIGKHSMILNNAMPQMEVDPETYEVRADGELLTCEPVDVVPMAQRYFLF</sequence>
<feature type="chain" id="PRO_0000234141" description="Urease subunit alpha 1">
    <location>
        <begin position="1"/>
        <end position="570"/>
    </location>
</feature>
<feature type="domain" description="Urease" evidence="1">
    <location>
        <begin position="131"/>
        <end position="570"/>
    </location>
</feature>
<feature type="active site" description="Proton donor" evidence="1">
    <location>
        <position position="322"/>
    </location>
</feature>
<feature type="binding site" evidence="1">
    <location>
        <position position="136"/>
    </location>
    <ligand>
        <name>Ni(2+)</name>
        <dbReference type="ChEBI" id="CHEBI:49786"/>
        <label>1</label>
    </ligand>
</feature>
<feature type="binding site" evidence="1">
    <location>
        <position position="138"/>
    </location>
    <ligand>
        <name>Ni(2+)</name>
        <dbReference type="ChEBI" id="CHEBI:49786"/>
        <label>1</label>
    </ligand>
</feature>
<feature type="binding site" description="via carbamate group" evidence="1">
    <location>
        <position position="219"/>
    </location>
    <ligand>
        <name>Ni(2+)</name>
        <dbReference type="ChEBI" id="CHEBI:49786"/>
        <label>1</label>
    </ligand>
</feature>
<feature type="binding site" description="via carbamate group" evidence="1">
    <location>
        <position position="219"/>
    </location>
    <ligand>
        <name>Ni(2+)</name>
        <dbReference type="ChEBI" id="CHEBI:49786"/>
        <label>2</label>
    </ligand>
</feature>
<feature type="binding site" evidence="1">
    <location>
        <position position="221"/>
    </location>
    <ligand>
        <name>substrate</name>
    </ligand>
</feature>
<feature type="binding site" evidence="1">
    <location>
        <position position="248"/>
    </location>
    <ligand>
        <name>Ni(2+)</name>
        <dbReference type="ChEBI" id="CHEBI:49786"/>
        <label>2</label>
    </ligand>
</feature>
<feature type="binding site" evidence="1">
    <location>
        <position position="274"/>
    </location>
    <ligand>
        <name>Ni(2+)</name>
        <dbReference type="ChEBI" id="CHEBI:49786"/>
        <label>2</label>
    </ligand>
</feature>
<feature type="binding site" evidence="1">
    <location>
        <position position="362"/>
    </location>
    <ligand>
        <name>Ni(2+)</name>
        <dbReference type="ChEBI" id="CHEBI:49786"/>
        <label>1</label>
    </ligand>
</feature>
<feature type="modified residue" description="N6-carboxylysine" evidence="1">
    <location>
        <position position="219"/>
    </location>
</feature>
<dbReference type="EC" id="3.5.1.5" evidence="1"/>
<dbReference type="EMBL" id="AF361941">
    <property type="protein sequence ID" value="AAK51069.1"/>
    <property type="molecule type" value="Genomic_DNA"/>
</dbReference>
<dbReference type="EMBL" id="AM040264">
    <property type="protein sequence ID" value="CAJ10256.1"/>
    <property type="molecule type" value="Genomic_DNA"/>
</dbReference>
<dbReference type="SMR" id="Q2YPD5"/>
<dbReference type="STRING" id="359391.BAB1_0300"/>
<dbReference type="MEROPS" id="M38.982"/>
<dbReference type="KEGG" id="bmf:BAB1_0300"/>
<dbReference type="PATRIC" id="fig|359391.11.peg.2348"/>
<dbReference type="HOGENOM" id="CLU_000980_0_0_5"/>
<dbReference type="PhylomeDB" id="Q2YPD5"/>
<dbReference type="UniPathway" id="UPA00258">
    <property type="reaction ID" value="UER00370"/>
</dbReference>
<dbReference type="Proteomes" id="UP000002719">
    <property type="component" value="Chromosome I"/>
</dbReference>
<dbReference type="GO" id="GO:0005737">
    <property type="term" value="C:cytoplasm"/>
    <property type="evidence" value="ECO:0007669"/>
    <property type="project" value="UniProtKB-SubCell"/>
</dbReference>
<dbReference type="GO" id="GO:0016151">
    <property type="term" value="F:nickel cation binding"/>
    <property type="evidence" value="ECO:0007669"/>
    <property type="project" value="UniProtKB-UniRule"/>
</dbReference>
<dbReference type="GO" id="GO:0009039">
    <property type="term" value="F:urease activity"/>
    <property type="evidence" value="ECO:0007669"/>
    <property type="project" value="UniProtKB-UniRule"/>
</dbReference>
<dbReference type="GO" id="GO:0043419">
    <property type="term" value="P:urea catabolic process"/>
    <property type="evidence" value="ECO:0007669"/>
    <property type="project" value="UniProtKB-UniRule"/>
</dbReference>
<dbReference type="CDD" id="cd00375">
    <property type="entry name" value="Urease_alpha"/>
    <property type="match status" value="1"/>
</dbReference>
<dbReference type="Gene3D" id="3.20.20.140">
    <property type="entry name" value="Metal-dependent hydrolases"/>
    <property type="match status" value="1"/>
</dbReference>
<dbReference type="Gene3D" id="2.30.40.10">
    <property type="entry name" value="Urease, subunit C, domain 1"/>
    <property type="match status" value="1"/>
</dbReference>
<dbReference type="HAMAP" id="MF_01953">
    <property type="entry name" value="Urease_alpha"/>
    <property type="match status" value="1"/>
</dbReference>
<dbReference type="InterPro" id="IPR006680">
    <property type="entry name" value="Amidohydro-rel"/>
</dbReference>
<dbReference type="InterPro" id="IPR011059">
    <property type="entry name" value="Metal-dep_hydrolase_composite"/>
</dbReference>
<dbReference type="InterPro" id="IPR032466">
    <property type="entry name" value="Metal_Hydrolase"/>
</dbReference>
<dbReference type="InterPro" id="IPR011612">
    <property type="entry name" value="Urease_alpha_N_dom"/>
</dbReference>
<dbReference type="InterPro" id="IPR050112">
    <property type="entry name" value="Urease_alpha_subunit"/>
</dbReference>
<dbReference type="InterPro" id="IPR017950">
    <property type="entry name" value="Urease_AS"/>
</dbReference>
<dbReference type="InterPro" id="IPR005848">
    <property type="entry name" value="Urease_asu"/>
</dbReference>
<dbReference type="InterPro" id="IPR017951">
    <property type="entry name" value="Urease_asu_c"/>
</dbReference>
<dbReference type="InterPro" id="IPR029754">
    <property type="entry name" value="Urease_Ni-bd"/>
</dbReference>
<dbReference type="NCBIfam" id="NF009685">
    <property type="entry name" value="PRK13206.1"/>
    <property type="match status" value="1"/>
</dbReference>
<dbReference type="NCBIfam" id="NF009686">
    <property type="entry name" value="PRK13207.1"/>
    <property type="match status" value="1"/>
</dbReference>
<dbReference type="NCBIfam" id="TIGR01792">
    <property type="entry name" value="urease_alph"/>
    <property type="match status" value="1"/>
</dbReference>
<dbReference type="PANTHER" id="PTHR43440">
    <property type="entry name" value="UREASE"/>
    <property type="match status" value="1"/>
</dbReference>
<dbReference type="PANTHER" id="PTHR43440:SF1">
    <property type="entry name" value="UREASE"/>
    <property type="match status" value="1"/>
</dbReference>
<dbReference type="Pfam" id="PF01979">
    <property type="entry name" value="Amidohydro_1"/>
    <property type="match status" value="1"/>
</dbReference>
<dbReference type="Pfam" id="PF00449">
    <property type="entry name" value="Urease_alpha"/>
    <property type="match status" value="1"/>
</dbReference>
<dbReference type="PRINTS" id="PR01752">
    <property type="entry name" value="UREASE"/>
</dbReference>
<dbReference type="SUPFAM" id="SSF51338">
    <property type="entry name" value="Composite domain of metallo-dependent hydrolases"/>
    <property type="match status" value="2"/>
</dbReference>
<dbReference type="SUPFAM" id="SSF51556">
    <property type="entry name" value="Metallo-dependent hydrolases"/>
    <property type="match status" value="1"/>
</dbReference>
<dbReference type="PROSITE" id="PS01120">
    <property type="entry name" value="UREASE_1"/>
    <property type="match status" value="1"/>
</dbReference>
<dbReference type="PROSITE" id="PS00145">
    <property type="entry name" value="UREASE_2"/>
    <property type="match status" value="1"/>
</dbReference>
<dbReference type="PROSITE" id="PS51368">
    <property type="entry name" value="UREASE_3"/>
    <property type="match status" value="1"/>
</dbReference>
<proteinExistence type="evidence at protein level"/>
<name>URE11_BRUA2</name>
<protein>
    <recommendedName>
        <fullName evidence="1">Urease subunit alpha 1</fullName>
        <ecNumber evidence="1">3.5.1.5</ecNumber>
    </recommendedName>
    <alternativeName>
        <fullName evidence="1">Urea amidohydrolase subunit alpha 1</fullName>
    </alternativeName>
</protein>
<evidence type="ECO:0000255" key="1">
    <source>
        <dbReference type="HAMAP-Rule" id="MF_01953"/>
    </source>
</evidence>
<evidence type="ECO:0000269" key="2">
    <source>
    </source>
</evidence>
<accession>Q2YPD5</accession>
<gene>
    <name evidence="1" type="primary">ureC1</name>
    <name type="ordered locus">BAB1_0300</name>
</gene>
<keyword id="KW-0963">Cytoplasm</keyword>
<keyword id="KW-0378">Hydrolase</keyword>
<keyword id="KW-0479">Metal-binding</keyword>
<keyword id="KW-0533">Nickel</keyword>
<keyword id="KW-1185">Reference proteome</keyword>
<keyword id="KW-0843">Virulence</keyword>